<comment type="function">
    <text evidence="2 6">Membrane component of antiviral defense system Retron Ec48, composed of a non-coding RNA (ncRNA), a reverse transcriptase (RT) and this membrane protein. Expression of this retron confers protection against bacteriophages lambda, T2, T4, T5 and T7. At multiplicity of infection (MOI) of 0.02 cultures grow normally when infected with lambda without collapsing, at MOI 2 cultures enter growth stasis. At MOI 3 cell membranes are permeabilized within 15 minutes of infection but do not lyse, suggesting the phage are not able to finish a replication cycle. Antiviral defense is suppressed by mutations that knockout the lambda gam expression or phage T7 gp5.9 expression; both viral genes inhibit host RecBCD (PubMed:33157039). The Ec48 retron may sense the integrity of the RecBCD enzyme; when RecBCD is perturbed by viral proteins the Ec48 effector (the membrane protein) is activated, leading to abortive infection and bacterial growth arrest (Probable).</text>
</comment>
<comment type="subcellular location">
    <subcellularLocation>
        <location evidence="5">Cell inner membrane</location>
        <topology evidence="1">Multi-pass membrane protein</topology>
    </subcellularLocation>
</comment>
<comment type="domain">
    <text evidence="2">The N-terminal transmembrane region is required for protection against bacteriophage infection.</text>
</comment>
<comment type="sequence caution" evidence="5">
    <conflict type="frameshift">
        <sequence resource="EMBL" id="U66703"/>
    </conflict>
</comment>
<organism>
    <name type="scientific">Escherichia coli</name>
    <dbReference type="NCBI Taxonomy" id="562"/>
    <lineage>
        <taxon>Bacteria</taxon>
        <taxon>Pseudomonadati</taxon>
        <taxon>Pseudomonadota</taxon>
        <taxon>Gammaproteobacteria</taxon>
        <taxon>Enterobacterales</taxon>
        <taxon>Enterobacteriaceae</taxon>
        <taxon>Escherichia</taxon>
    </lineage>
</organism>
<dbReference type="EMBL" id="U66703">
    <property type="status" value="NOT_ANNOTATED_CDS"/>
    <property type="molecule type" value="Genomic_DNA"/>
</dbReference>
<dbReference type="EMBL" id="CXZM01000001">
    <property type="protein sequence ID" value="CTR27284.1"/>
    <property type="molecule type" value="Genomic_DNA"/>
</dbReference>
<dbReference type="RefSeq" id="WP_000993280.1">
    <property type="nucleotide sequence ID" value="NZ_WMDU01000021.1"/>
</dbReference>
<dbReference type="SMR" id="P0DV85"/>
<dbReference type="GO" id="GO:0005886">
    <property type="term" value="C:plasma membrane"/>
    <property type="evidence" value="ECO:0007669"/>
    <property type="project" value="UniProtKB-SubCell"/>
</dbReference>
<dbReference type="GO" id="GO:0051607">
    <property type="term" value="P:defense response to virus"/>
    <property type="evidence" value="ECO:0007669"/>
    <property type="project" value="UniProtKB-KW"/>
</dbReference>
<dbReference type="InterPro" id="IPR053597">
    <property type="entry name" value="Retron_Ec48_antiviral"/>
</dbReference>
<dbReference type="NCBIfam" id="NF038235">
    <property type="entry name" value="retron_Ec48_2TM"/>
    <property type="match status" value="1"/>
</dbReference>
<keyword id="KW-0051">Antiviral defense</keyword>
<keyword id="KW-0997">Cell inner membrane</keyword>
<keyword id="KW-1003">Cell membrane</keyword>
<keyword id="KW-0472">Membrane</keyword>
<keyword id="KW-0812">Transmembrane</keyword>
<keyword id="KW-1133">Transmembrane helix</keyword>
<evidence type="ECO:0000255" key="1"/>
<evidence type="ECO:0000269" key="2">
    <source>
    </source>
</evidence>
<evidence type="ECO:0000303" key="3">
    <source>
    </source>
</evidence>
<evidence type="ECO:0000303" key="4">
    <source ref="2"/>
</evidence>
<evidence type="ECO:0000305" key="5"/>
<evidence type="ECO:0000305" key="6">
    <source>
    </source>
</evidence>
<evidence type="ECO:0000312" key="7">
    <source>
        <dbReference type="EMBL" id="CTR27284.1"/>
    </source>
</evidence>
<evidence type="ECO:0000312" key="8">
    <source>
        <dbReference type="EMBL" id="U66703"/>
    </source>
</evidence>
<accession>P0DV85</accession>
<reference evidence="8" key="1">
    <citation type="journal article" date="1996" name="Biochem. Biophys. Res. Commun.">
        <title>An unusual bacterial reverse transcriptase having LVDD in the YXDD box from Escherichia coli.</title>
        <authorList>
            <person name="Mao J.R."/>
            <person name="Inouye M."/>
            <person name="Inouye S."/>
        </authorList>
    </citation>
    <scope>NUCLEOTIDE SEQUENCE [GENOMIC DNA]</scope>
    <source>
        <strain>ATCC 35377 / ECOR 58</strain>
    </source>
</reference>
<reference evidence="7" key="2">
    <citation type="submission" date="2015-08" db="EMBL/GenBank/DDBJ databases">
        <authorList>
            <consortium name="Pathogen Informatics"/>
        </authorList>
    </citation>
    <scope>NUCLEOTIDE SEQUENCE [LARGE SCALE GENOMIC DNA]</scope>
    <source>
        <strain>700337</strain>
    </source>
</reference>
<reference key="3">
    <citation type="journal article" date="2020" name="Cell">
        <title>Bacterial Retrons Function In Anti-Phage Defense.</title>
        <authorList>
            <person name="Millman A."/>
            <person name="Bernheim A."/>
            <person name="Stokar-Avihail A."/>
            <person name="Fedorenko T."/>
            <person name="Voichek M."/>
            <person name="Leavitt A."/>
            <person name="Oppenheimer-Shaanan Y."/>
            <person name="Sorek R."/>
        </authorList>
    </citation>
    <scope>FUNCTION IN ANTIVIRAL DEFENSE</scope>
    <scope>IDENTIFICATION AS A RETRON</scope>
    <scope>DOMAIN</scope>
    <scope>MUTAGENESIS OF 3-ALA--TYR-85</scope>
    <source>
        <strain>700337</strain>
    </source>
</reference>
<feature type="chain" id="PRO_0000456034" description="Retron Ec48 transmembrane protein">
    <location>
        <begin position="1"/>
        <end position="235"/>
    </location>
</feature>
<feature type="transmembrane region" description="Helical" evidence="1">
    <location>
        <begin position="11"/>
        <end position="31"/>
    </location>
</feature>
<feature type="transmembrane region" description="Helical" evidence="1">
    <location>
        <begin position="64"/>
        <end position="84"/>
    </location>
</feature>
<feature type="mutagenesis site" description="No longer protects against infection by lambda, T2, T4, T5 or T7, cells are not permeabilized and lyse 45 minutes after infection with lambda." evidence="2">
    <location>
        <begin position="3"/>
        <end position="85"/>
    </location>
</feature>
<feature type="sequence conflict" description="In Ref. 1; U66703." evidence="5" ref="1">
    <original>I</original>
    <variation>S</variation>
    <location>
        <position position="21"/>
    </location>
</feature>
<feature type="sequence conflict" description="In Ref. 1; U66703." evidence="5" ref="1">
    <original>K</original>
    <variation>N</variation>
    <location>
        <position position="122"/>
    </location>
</feature>
<feature type="sequence conflict" description="In Ref. 1; U66703." evidence="5" ref="1">
    <original>A</original>
    <variation>G</variation>
    <location>
        <position position="136"/>
    </location>
</feature>
<feature type="sequence conflict" description="In Ref. 1; U66703." evidence="5" ref="1">
    <location>
        <begin position="150"/>
        <end position="153"/>
    </location>
</feature>
<proteinExistence type="evidence at protein level"/>
<name>TM48_ECOLX</name>
<gene>
    <name evidence="4" type="ORF">ERS085376_00285</name>
    <name type="ORF">Ga0119542_1001286</name>
</gene>
<sequence length="235" mass="27237">MNANIRLLKYIVGVSSALFLIFSLISLFETIQNEKLYERDICFDSQCLKFFAEKTSGIVMYFQAFGWLITTFVTVFGVMIALMTYNAGVKNNNNSNYTSHLTMFREFASAELTKRSSIYPEKVNFFRWYRVMFPEAQGGDISVSRDYLEIISRIKCVIEEANAHITEENKDYKYKTHQRKMMAVLDEIGISISNGPKNIFIEVESQILDYIDTINLSFCHSSSVIELSRVKRKYI</sequence>
<protein>
    <recommendedName>
        <fullName evidence="3">Retron Ec48 transmembrane protein</fullName>
    </recommendedName>
</protein>